<dbReference type="EMBL" id="AJ719276">
    <property type="protein sequence ID" value="CAG30935.1"/>
    <property type="status" value="ALT_INIT"/>
    <property type="molecule type" value="mRNA"/>
</dbReference>
<dbReference type="RefSeq" id="NP_001026649.2">
    <property type="nucleotide sequence ID" value="NM_001031478.2"/>
</dbReference>
<dbReference type="SMR" id="Q5ZMV8"/>
<dbReference type="FunCoup" id="Q5ZMV8">
    <property type="interactions" value="77"/>
</dbReference>
<dbReference type="STRING" id="9031.ENSGALP00000068336"/>
<dbReference type="PaxDb" id="9031-ENSGALP00000009417"/>
<dbReference type="GeneID" id="427841"/>
<dbReference type="KEGG" id="gga:427841"/>
<dbReference type="CTD" id="23108"/>
<dbReference type="VEuPathDB" id="HostDB:geneid_427841"/>
<dbReference type="eggNOG" id="KOG3686">
    <property type="taxonomic scope" value="Eukaryota"/>
</dbReference>
<dbReference type="HOGENOM" id="CLU_010739_2_2_1"/>
<dbReference type="InParanoid" id="Q5ZMV8"/>
<dbReference type="OrthoDB" id="2499658at2759"/>
<dbReference type="PhylomeDB" id="Q5ZMV8"/>
<dbReference type="TreeFam" id="TF318626"/>
<dbReference type="PRO" id="PR:Q5ZMV8"/>
<dbReference type="Proteomes" id="UP000000539">
    <property type="component" value="Unassembled WGS sequence"/>
</dbReference>
<dbReference type="GO" id="GO:0005737">
    <property type="term" value="C:cytoplasm"/>
    <property type="evidence" value="ECO:0000318"/>
    <property type="project" value="GO_Central"/>
</dbReference>
<dbReference type="GO" id="GO:0005886">
    <property type="term" value="C:plasma membrane"/>
    <property type="evidence" value="ECO:0000318"/>
    <property type="project" value="GO_Central"/>
</dbReference>
<dbReference type="GO" id="GO:0005096">
    <property type="term" value="F:GTPase activator activity"/>
    <property type="evidence" value="ECO:0000318"/>
    <property type="project" value="GO_Central"/>
</dbReference>
<dbReference type="GO" id="GO:0051056">
    <property type="term" value="P:regulation of small GTPase mediated signal transduction"/>
    <property type="evidence" value="ECO:0007669"/>
    <property type="project" value="InterPro"/>
</dbReference>
<dbReference type="FunFam" id="3.40.50.11210:FF:000003">
    <property type="entry name" value="RAP1 GTPase activating protein 2"/>
    <property type="match status" value="1"/>
</dbReference>
<dbReference type="Gene3D" id="6.10.140.210">
    <property type="match status" value="1"/>
</dbReference>
<dbReference type="Gene3D" id="3.40.50.11210">
    <property type="entry name" value="Rap/Ran-GAP"/>
    <property type="match status" value="1"/>
</dbReference>
<dbReference type="InterPro" id="IPR035974">
    <property type="entry name" value="Rap/Ran-GAP_sf"/>
</dbReference>
<dbReference type="InterPro" id="IPR000331">
    <property type="entry name" value="Rap/Ran_GAP_dom"/>
</dbReference>
<dbReference type="InterPro" id="IPR050989">
    <property type="entry name" value="Rap1_Ran_GAP"/>
</dbReference>
<dbReference type="PANTHER" id="PTHR15711">
    <property type="entry name" value="RAP GTPASE-ACTIVATING PROTEIN"/>
    <property type="match status" value="1"/>
</dbReference>
<dbReference type="PANTHER" id="PTHR15711:SF17">
    <property type="entry name" value="RAP1 GTPASE-ACTIVATING PROTEIN 2"/>
    <property type="match status" value="1"/>
</dbReference>
<dbReference type="Pfam" id="PF21022">
    <property type="entry name" value="Rap-GAP_dimer"/>
    <property type="match status" value="1"/>
</dbReference>
<dbReference type="Pfam" id="PF02145">
    <property type="entry name" value="Rap_GAP"/>
    <property type="match status" value="1"/>
</dbReference>
<dbReference type="SUPFAM" id="SSF111347">
    <property type="entry name" value="Rap/Ran-GAP"/>
    <property type="match status" value="1"/>
</dbReference>
<dbReference type="PROSITE" id="PS50085">
    <property type="entry name" value="RAPGAP"/>
    <property type="match status" value="1"/>
</dbReference>
<comment type="function">
    <text evidence="1">GTPase activator for the nuclear Ras-related regulatory protein RAP-1A (KREV-1), converting it to the putatively inactive GDP-bound state.</text>
</comment>
<comment type="subcellular location">
    <subcellularLocation>
        <location evidence="1">Cytoplasm</location>
    </subcellularLocation>
</comment>
<comment type="sequence caution" evidence="4">
    <conflict type="erroneous initiation">
        <sequence resource="EMBL-CDS" id="CAG30935"/>
    </conflict>
</comment>
<name>RPGP2_CHICK</name>
<gene>
    <name type="primary">RAP1GAP2</name>
    <name type="synonym">GARNL4</name>
    <name type="ORF">RCJMB04_1a20</name>
</gene>
<feature type="chain" id="PRO_0000312718" description="Rap1 GTPase-activating protein 2">
    <location>
        <begin position="1"/>
        <end position="730"/>
    </location>
</feature>
<feature type="domain" description="Rap-GAP" evidence="2">
    <location>
        <begin position="247"/>
        <end position="463"/>
    </location>
</feature>
<feature type="region of interest" description="Disordered" evidence="3">
    <location>
        <begin position="510"/>
        <end position="668"/>
    </location>
</feature>
<feature type="region of interest" description="Disordered" evidence="3">
    <location>
        <begin position="698"/>
        <end position="730"/>
    </location>
</feature>
<feature type="compositionally biased region" description="Polar residues" evidence="3">
    <location>
        <begin position="535"/>
        <end position="557"/>
    </location>
</feature>
<feature type="compositionally biased region" description="Polar residues" evidence="3">
    <location>
        <begin position="597"/>
        <end position="612"/>
    </location>
</feature>
<feature type="compositionally biased region" description="Basic and acidic residues" evidence="3">
    <location>
        <begin position="617"/>
        <end position="630"/>
    </location>
</feature>
<feature type="compositionally biased region" description="Low complexity" evidence="3">
    <location>
        <begin position="631"/>
        <end position="651"/>
    </location>
</feature>
<feature type="compositionally biased region" description="Polar residues" evidence="3">
    <location>
        <begin position="699"/>
        <end position="712"/>
    </location>
</feature>
<evidence type="ECO:0000250" key="1"/>
<evidence type="ECO:0000255" key="2">
    <source>
        <dbReference type="PROSITE-ProRule" id="PRU00165"/>
    </source>
</evidence>
<evidence type="ECO:0000256" key="3">
    <source>
        <dbReference type="SAM" id="MobiDB-lite"/>
    </source>
</evidence>
<evidence type="ECO:0000305" key="4"/>
<protein>
    <recommendedName>
        <fullName>Rap1 GTPase-activating protein 2</fullName>
        <shortName>Rap1GAP2</shortName>
    </recommendedName>
    <alternativeName>
        <fullName>GTPase-activating Rap/Ran-GAP domain-like protein 4</fullName>
    </alternativeName>
</protein>
<keyword id="KW-0963">Cytoplasm</keyword>
<keyword id="KW-0343">GTPase activation</keyword>
<keyword id="KW-1185">Reference proteome</keyword>
<sequence length="730" mass="80792">MFQRKRSVSFGGYGWIDKTMLASLKMKKQELLSSADVTLPERPLSPPLTAPPTMKSAEFFEMLEKMQAPKLEDQKAGSQKHKEDYIPYPSIDEILEKGSPYPLVILPQFGGYWIEDPENLGTPTSSDSSVCEEEEENFSPSPYGYKLECKGEARAYRKHFLGKDHLNFYCTASSLGNLILSIKCEEVDGTEYLRIILRSKVKTLHERIPLAGFSKLPSIPQIAKAFCDDASGLKFNPVLYPKASQMIVAYDEHEVNNTFKFGVIYQKFRQTQEEELFGNNEESAAFRNFLNLLGDTITLQDFKGFRGGLDVSHGQTGVESVYTVFRDREIMFHVSTKLPFTEGDTQQLQRKRHIGNDIVAIIFQEENTPFVPDMIASNFLHAYIVVQVENPDADTTSYKVSVTAREDVPSFGPPLPSPPVFQKSPEFREFLLTKLINAENACCKSDKFAKLEDRTRAALLDNLHDELHGHTQTMLGLGPEEDKLENGGHGGFLESFKRAIRVRSHSMETMVGSQRKQHGGGIPGSLSGGIAHNSGEVTKTTFSPPVSAATAKNQSRSPIKRRSGLFPRLHTGLESQVDSRARCDSISGPQKTPDVGHSSQEMKSETSSNPSSPEICPNKDRPFVKLKENGRSNISRSSSSTSSFSSTAGESETLEEYDSVGSQPSTASPFKQDVFIYSASPGSDSPSVGAAATPVIMSRSPTDIKNRNSPRSNLKFRFDKLSHGSSSTSH</sequence>
<organism>
    <name type="scientific">Gallus gallus</name>
    <name type="common">Chicken</name>
    <dbReference type="NCBI Taxonomy" id="9031"/>
    <lineage>
        <taxon>Eukaryota</taxon>
        <taxon>Metazoa</taxon>
        <taxon>Chordata</taxon>
        <taxon>Craniata</taxon>
        <taxon>Vertebrata</taxon>
        <taxon>Euteleostomi</taxon>
        <taxon>Archelosauria</taxon>
        <taxon>Archosauria</taxon>
        <taxon>Dinosauria</taxon>
        <taxon>Saurischia</taxon>
        <taxon>Theropoda</taxon>
        <taxon>Coelurosauria</taxon>
        <taxon>Aves</taxon>
        <taxon>Neognathae</taxon>
        <taxon>Galloanserae</taxon>
        <taxon>Galliformes</taxon>
        <taxon>Phasianidae</taxon>
        <taxon>Phasianinae</taxon>
        <taxon>Gallus</taxon>
    </lineage>
</organism>
<reference key="1">
    <citation type="journal article" date="2005" name="Genome Biol.">
        <title>Full-length cDNAs from chicken bursal lymphocytes to facilitate gene function analysis.</title>
        <authorList>
            <person name="Caldwell R.B."/>
            <person name="Kierzek A.M."/>
            <person name="Arakawa H."/>
            <person name="Bezzubov Y."/>
            <person name="Zaim J."/>
            <person name="Fiedler P."/>
            <person name="Kutter S."/>
            <person name="Blagodatski A."/>
            <person name="Kostovska D."/>
            <person name="Koter M."/>
            <person name="Plachy J."/>
            <person name="Carninci P."/>
            <person name="Hayashizaki Y."/>
            <person name="Buerstedde J.-M."/>
        </authorList>
    </citation>
    <scope>NUCLEOTIDE SEQUENCE [LARGE SCALE MRNA]</scope>
    <source>
        <strain>CB</strain>
        <tissue>Bursa of Fabricius</tissue>
    </source>
</reference>
<accession>Q5ZMV8</accession>
<proteinExistence type="evidence at transcript level"/>